<gene>
    <name type="primary">trkA</name>
    <name type="synonym">sapG</name>
    <name type="ordered locus">STY4388</name>
    <name type="ordered locus">t4095</name>
</gene>
<feature type="chain" id="PRO_0000148716" description="Trk system potassium uptake protein TrkA">
    <location>
        <begin position="1"/>
        <end position="458"/>
    </location>
</feature>
<feature type="domain" description="RCK N-terminal 1" evidence="3">
    <location>
        <begin position="1"/>
        <end position="123"/>
    </location>
</feature>
<feature type="domain" description="RCK C-terminal 1" evidence="4">
    <location>
        <begin position="143"/>
        <end position="227"/>
    </location>
</feature>
<feature type="domain" description="RCK N-terminal 2" evidence="3">
    <location>
        <begin position="232"/>
        <end position="348"/>
    </location>
</feature>
<feature type="domain" description="RCK C-terminal 2" evidence="4">
    <location>
        <begin position="368"/>
        <end position="453"/>
    </location>
</feature>
<feature type="binding site" description="in other chain" evidence="1">
    <location>
        <begin position="7"/>
        <end position="11"/>
    </location>
    <ligand>
        <name>NAD(+)</name>
        <dbReference type="ChEBI" id="CHEBI:57540"/>
        <label>1</label>
        <note>ligand shared between dimeric partners</note>
    </ligand>
</feature>
<feature type="binding site" description="in other chain" evidence="1">
    <location>
        <position position="30"/>
    </location>
    <ligand>
        <name>NAD(+)</name>
        <dbReference type="ChEBI" id="CHEBI:57540"/>
        <label>1</label>
        <note>ligand shared between dimeric partners</note>
    </ligand>
</feature>
<feature type="binding site" description="in other chain" evidence="1">
    <location>
        <begin position="73"/>
        <end position="74"/>
    </location>
    <ligand>
        <name>NAD(+)</name>
        <dbReference type="ChEBI" id="CHEBI:57540"/>
        <label>1</label>
        <note>ligand shared between dimeric partners</note>
    </ligand>
</feature>
<feature type="binding site" evidence="1">
    <location>
        <position position="98"/>
    </location>
    <ligand>
        <name>NAD(+)</name>
        <dbReference type="ChEBI" id="CHEBI:57540"/>
        <label>1</label>
        <note>ligand shared between dimeric partners</note>
    </ligand>
</feature>
<feature type="binding site" evidence="2">
    <location>
        <begin position="234"/>
        <end position="262"/>
    </location>
    <ligand>
        <name>NAD(+)</name>
        <dbReference type="ChEBI" id="CHEBI:57540"/>
        <label>2</label>
    </ligand>
</feature>
<protein>
    <recommendedName>
        <fullName>Trk system potassium uptake protein TrkA</fullName>
        <shortName>K(+)-uptake protein TrkA</shortName>
    </recommendedName>
</protein>
<proteinExistence type="inferred from homology"/>
<dbReference type="EMBL" id="AL513382">
    <property type="protein sequence ID" value="CAD09176.1"/>
    <property type="molecule type" value="Genomic_DNA"/>
</dbReference>
<dbReference type="EMBL" id="AE014613">
    <property type="protein sequence ID" value="AAO71562.1"/>
    <property type="molecule type" value="Genomic_DNA"/>
</dbReference>
<dbReference type="RefSeq" id="NP_458490.1">
    <property type="nucleotide sequence ID" value="NC_003198.1"/>
</dbReference>
<dbReference type="RefSeq" id="WP_000691374.1">
    <property type="nucleotide sequence ID" value="NZ_WSUR01000046.1"/>
</dbReference>
<dbReference type="SMR" id="P0A2K0"/>
<dbReference type="STRING" id="220341.gene:17588216"/>
<dbReference type="GeneID" id="66757744"/>
<dbReference type="KEGG" id="stt:t4095"/>
<dbReference type="KEGG" id="sty:STY4388"/>
<dbReference type="PATRIC" id="fig|220341.7.peg.4484"/>
<dbReference type="eggNOG" id="COG0569">
    <property type="taxonomic scope" value="Bacteria"/>
</dbReference>
<dbReference type="HOGENOM" id="CLU_046525_0_2_6"/>
<dbReference type="OMA" id="IACQVAY"/>
<dbReference type="OrthoDB" id="9775180at2"/>
<dbReference type="Proteomes" id="UP000000541">
    <property type="component" value="Chromosome"/>
</dbReference>
<dbReference type="Proteomes" id="UP000002670">
    <property type="component" value="Chromosome"/>
</dbReference>
<dbReference type="GO" id="GO:0005886">
    <property type="term" value="C:plasma membrane"/>
    <property type="evidence" value="ECO:0007669"/>
    <property type="project" value="UniProtKB-SubCell"/>
</dbReference>
<dbReference type="GO" id="GO:0015079">
    <property type="term" value="F:potassium ion transmembrane transporter activity"/>
    <property type="evidence" value="ECO:0007669"/>
    <property type="project" value="InterPro"/>
</dbReference>
<dbReference type="FunFam" id="3.30.70.1450:FF:000001">
    <property type="entry name" value="Trk system potassium transporter TrkA"/>
    <property type="match status" value="1"/>
</dbReference>
<dbReference type="FunFam" id="3.30.70.1450:FF:000002">
    <property type="entry name" value="Trk system potassium transporter TrkA"/>
    <property type="match status" value="1"/>
</dbReference>
<dbReference type="FunFam" id="3.40.50.720:FF:000027">
    <property type="entry name" value="Trk system potassium transporter TrkA"/>
    <property type="match status" value="1"/>
</dbReference>
<dbReference type="FunFam" id="3.40.50.720:FF:000042">
    <property type="entry name" value="Trk system potassium transporter TrkA"/>
    <property type="match status" value="1"/>
</dbReference>
<dbReference type="Gene3D" id="3.40.50.720">
    <property type="entry name" value="NAD(P)-binding Rossmann-like Domain"/>
    <property type="match status" value="2"/>
</dbReference>
<dbReference type="Gene3D" id="3.30.70.1450">
    <property type="entry name" value="Regulator of K+ conductance, C-terminal domain"/>
    <property type="match status" value="2"/>
</dbReference>
<dbReference type="InterPro" id="IPR006036">
    <property type="entry name" value="K_uptake_TrkA"/>
</dbReference>
<dbReference type="InterPro" id="IPR036291">
    <property type="entry name" value="NAD(P)-bd_dom_sf"/>
</dbReference>
<dbReference type="InterPro" id="IPR006037">
    <property type="entry name" value="RCK_C"/>
</dbReference>
<dbReference type="InterPro" id="IPR036721">
    <property type="entry name" value="RCK_C_sf"/>
</dbReference>
<dbReference type="InterPro" id="IPR003148">
    <property type="entry name" value="RCK_N"/>
</dbReference>
<dbReference type="InterPro" id="IPR050721">
    <property type="entry name" value="Trk_Ktr_HKT_K-transport"/>
</dbReference>
<dbReference type="NCBIfam" id="NF007030">
    <property type="entry name" value="PRK09496.1-1"/>
    <property type="match status" value="1"/>
</dbReference>
<dbReference type="NCBIfam" id="NF007031">
    <property type="entry name" value="PRK09496.1-2"/>
    <property type="match status" value="1"/>
</dbReference>
<dbReference type="NCBIfam" id="NF007032">
    <property type="entry name" value="PRK09496.1-4"/>
    <property type="match status" value="1"/>
</dbReference>
<dbReference type="NCBIfam" id="NF007039">
    <property type="entry name" value="PRK09496.3-2"/>
    <property type="match status" value="1"/>
</dbReference>
<dbReference type="PANTHER" id="PTHR43833">
    <property type="entry name" value="POTASSIUM CHANNEL PROTEIN 2-RELATED-RELATED"/>
    <property type="match status" value="1"/>
</dbReference>
<dbReference type="PANTHER" id="PTHR43833:SF5">
    <property type="entry name" value="TRK SYSTEM POTASSIUM UPTAKE PROTEIN TRKA"/>
    <property type="match status" value="1"/>
</dbReference>
<dbReference type="Pfam" id="PF02080">
    <property type="entry name" value="TrkA_C"/>
    <property type="match status" value="2"/>
</dbReference>
<dbReference type="Pfam" id="PF02254">
    <property type="entry name" value="TrkA_N"/>
    <property type="match status" value="2"/>
</dbReference>
<dbReference type="PRINTS" id="PR00335">
    <property type="entry name" value="KUPTAKETRKA"/>
</dbReference>
<dbReference type="SUPFAM" id="SSF51735">
    <property type="entry name" value="NAD(P)-binding Rossmann-fold domains"/>
    <property type="match status" value="2"/>
</dbReference>
<dbReference type="SUPFAM" id="SSF116726">
    <property type="entry name" value="TrkA C-terminal domain-like"/>
    <property type="match status" value="2"/>
</dbReference>
<dbReference type="PROSITE" id="PS51202">
    <property type="entry name" value="RCK_C"/>
    <property type="match status" value="2"/>
</dbReference>
<dbReference type="PROSITE" id="PS51201">
    <property type="entry name" value="RCK_N"/>
    <property type="match status" value="2"/>
</dbReference>
<accession>P0A2K0</accession>
<accession>P39445</accession>
<comment type="function">
    <text evidence="1">Part of the constitutive potassium transport systems TrkG and TrkH. May regulate the transport activity of TrkG and TrkH systems. Binds to NAD(+) and NADH. In Salmonella it is required for resistance to antimicrobial peptides (By similarity).</text>
</comment>
<comment type="subcellular location">
    <subcellularLocation>
        <location evidence="1">Cell inner membrane</location>
        <topology evidence="1">Peripheral membrane protein</topology>
        <orientation evidence="1">Cytoplasmic side</orientation>
    </subcellularLocation>
    <text evidence="1">Peripherally bound to the inner side of the inner membrane via the TrkG and TrkH proteins.</text>
</comment>
<comment type="domain">
    <text evidence="1">The RCK N-terminal domain binds NAD and possibly other effectors. This is expected to cause a conformation change that regulates potassium transport (By similarity).</text>
</comment>
<sequence length="458" mass="50369">MKIIILGAGQVGGTLAENLVGENNDITVVDTNGERLRSLQDKFDLRVVQGHGSHPRVLREAGADDADMLVAVTSSDETNMVACQVAYSLFNTPNRIARIRSPDYVRDADKLFHSEAVPIDHLIAPEQLVIDNIYRLIEYPGALQVVNFAEGKVSLAVVKAYYGGPLIGNALSTMREHMPHIDTRVAAIFRHDRPIRPQGSTIVEAGDEVFFIAASQHIRAVMSELQRLEKPYKRIMLVGGGNIGAGLARRLEKDYSVKLIERDQQRAAELAEKLQNTIVFFGDASDQELLAEEHIDQVDLFIAVTNDDEANIMSAMLAKRMGAKKVMVLIQRRAYVDLVQGSVIDIAISPQQATISALLSHVRKADIVGVSSLRRGVAEAIEAVAHGDESTSRVVGRVIDEIKLPPGTIIGAVVRGNDVMIANDNLRIEQGDHVIMFLTDKKFITDVERLFQPSPFFL</sequence>
<organism>
    <name type="scientific">Salmonella typhi</name>
    <dbReference type="NCBI Taxonomy" id="90370"/>
    <lineage>
        <taxon>Bacteria</taxon>
        <taxon>Pseudomonadati</taxon>
        <taxon>Pseudomonadota</taxon>
        <taxon>Gammaproteobacteria</taxon>
        <taxon>Enterobacterales</taxon>
        <taxon>Enterobacteriaceae</taxon>
        <taxon>Salmonella</taxon>
    </lineage>
</organism>
<evidence type="ECO:0000250" key="1"/>
<evidence type="ECO:0000255" key="2"/>
<evidence type="ECO:0000255" key="3">
    <source>
        <dbReference type="PROSITE-ProRule" id="PRU00543"/>
    </source>
</evidence>
<evidence type="ECO:0000255" key="4">
    <source>
        <dbReference type="PROSITE-ProRule" id="PRU00544"/>
    </source>
</evidence>
<reference key="1">
    <citation type="journal article" date="2001" name="Nature">
        <title>Complete genome sequence of a multiple drug resistant Salmonella enterica serovar Typhi CT18.</title>
        <authorList>
            <person name="Parkhill J."/>
            <person name="Dougan G."/>
            <person name="James K.D."/>
            <person name="Thomson N.R."/>
            <person name="Pickard D."/>
            <person name="Wain J."/>
            <person name="Churcher C.M."/>
            <person name="Mungall K.L."/>
            <person name="Bentley S.D."/>
            <person name="Holden M.T.G."/>
            <person name="Sebaihia M."/>
            <person name="Baker S."/>
            <person name="Basham D."/>
            <person name="Brooks K."/>
            <person name="Chillingworth T."/>
            <person name="Connerton P."/>
            <person name="Cronin A."/>
            <person name="Davis P."/>
            <person name="Davies R.M."/>
            <person name="Dowd L."/>
            <person name="White N."/>
            <person name="Farrar J."/>
            <person name="Feltwell T."/>
            <person name="Hamlin N."/>
            <person name="Haque A."/>
            <person name="Hien T.T."/>
            <person name="Holroyd S."/>
            <person name="Jagels K."/>
            <person name="Krogh A."/>
            <person name="Larsen T.S."/>
            <person name="Leather S."/>
            <person name="Moule S."/>
            <person name="O'Gaora P."/>
            <person name="Parry C."/>
            <person name="Quail M.A."/>
            <person name="Rutherford K.M."/>
            <person name="Simmonds M."/>
            <person name="Skelton J."/>
            <person name="Stevens K."/>
            <person name="Whitehead S."/>
            <person name="Barrell B.G."/>
        </authorList>
    </citation>
    <scope>NUCLEOTIDE SEQUENCE [LARGE SCALE GENOMIC DNA]</scope>
    <source>
        <strain>CT18</strain>
    </source>
</reference>
<reference key="2">
    <citation type="journal article" date="2003" name="J. Bacteriol.">
        <title>Comparative genomics of Salmonella enterica serovar Typhi strains Ty2 and CT18.</title>
        <authorList>
            <person name="Deng W."/>
            <person name="Liou S.-R."/>
            <person name="Plunkett G. III"/>
            <person name="Mayhew G.F."/>
            <person name="Rose D.J."/>
            <person name="Burland V."/>
            <person name="Kodoyianni V."/>
            <person name="Schwartz D.C."/>
            <person name="Blattner F.R."/>
        </authorList>
    </citation>
    <scope>NUCLEOTIDE SEQUENCE [LARGE SCALE GENOMIC DNA]</scope>
    <source>
        <strain>ATCC 700931 / Ty2</strain>
    </source>
</reference>
<keyword id="KW-0997">Cell inner membrane</keyword>
<keyword id="KW-1003">Cell membrane</keyword>
<keyword id="KW-0406">Ion transport</keyword>
<keyword id="KW-0472">Membrane</keyword>
<keyword id="KW-0520">NAD</keyword>
<keyword id="KW-0630">Potassium</keyword>
<keyword id="KW-0633">Potassium transport</keyword>
<keyword id="KW-0677">Repeat</keyword>
<keyword id="KW-0813">Transport</keyword>
<name>TRKA_SALTI</name>